<evidence type="ECO:0000255" key="1">
    <source>
        <dbReference type="HAMAP-Rule" id="MF_00411"/>
    </source>
</evidence>
<keyword id="KW-0963">Cytoplasm</keyword>
<keyword id="KW-0238">DNA-binding</keyword>
<keyword id="KW-0240">DNA-directed RNA polymerase</keyword>
<keyword id="KW-0548">Nucleotidyltransferase</keyword>
<keyword id="KW-0804">Transcription</keyword>
<keyword id="KW-0808">Transferase</keyword>
<sequence length="386" mass="42869">MQMADLEKKLENSVLPPLLKRELSEKILKEEISEEYLVDEIISETIRAYERTLVEPGEAVGVVAAQSIGEPGTQMTMRTFHYAGVAELNVTLGLPRMIEIVDARKEPSTPTMTIYLNDEFKGDREKASMVAKNIESTDVESVSEDISVDLINECITIVLNMHQLESRGLTVADVIESIKSKMKLKIEDHENVLNLKIKTPSLKALRKRLPKVRAIHLKGVQNIKRVIIRKEVDEYILYSEGSNIKEVFDIEGVDTTKTTTNNIVEIQDVLGIEAARNAIIYEMDATLGNQGLTVDKRHLMMVADLMCTDGVVKPIGRHGIGGEKASVLARAAFEETVKHLYSASMRGYVDELGGVVENIIVGKPIAMGTGCIDVCIDKKYEEGKEL</sequence>
<comment type="function">
    <text evidence="1">DNA-dependent RNA polymerase (RNAP) catalyzes the transcription of DNA into RNA using the four ribonucleoside triphosphates as substrates. Forms part of the jaw domain.</text>
</comment>
<comment type="catalytic activity">
    <reaction evidence="1">
        <text>RNA(n) + a ribonucleoside 5'-triphosphate = RNA(n+1) + diphosphate</text>
        <dbReference type="Rhea" id="RHEA:21248"/>
        <dbReference type="Rhea" id="RHEA-COMP:14527"/>
        <dbReference type="Rhea" id="RHEA-COMP:17342"/>
        <dbReference type="ChEBI" id="CHEBI:33019"/>
        <dbReference type="ChEBI" id="CHEBI:61557"/>
        <dbReference type="ChEBI" id="CHEBI:140395"/>
        <dbReference type="EC" id="2.7.7.6"/>
    </reaction>
</comment>
<comment type="subunit">
    <text evidence="1">Part of the RNA polymerase complex.</text>
</comment>
<comment type="subcellular location">
    <subcellularLocation>
        <location evidence="1">Cytoplasm</location>
    </subcellularLocation>
</comment>
<comment type="similarity">
    <text evidence="1">Belongs to the RNA polymerase beta' chain family.</text>
</comment>
<proteinExistence type="inferred from homology"/>
<dbReference type="EC" id="2.7.7.6" evidence="1"/>
<dbReference type="EMBL" id="CP000745">
    <property type="protein sequence ID" value="ABR65676.1"/>
    <property type="molecule type" value="Genomic_DNA"/>
</dbReference>
<dbReference type="SMR" id="A6VGV0"/>
<dbReference type="STRING" id="426368.MmarC7_0609"/>
<dbReference type="KEGG" id="mmz:MmarC7_0609"/>
<dbReference type="eggNOG" id="arCOG04256">
    <property type="taxonomic scope" value="Archaea"/>
</dbReference>
<dbReference type="HOGENOM" id="CLU_037097_1_0_2"/>
<dbReference type="OrthoDB" id="372142at2157"/>
<dbReference type="GO" id="GO:0005737">
    <property type="term" value="C:cytoplasm"/>
    <property type="evidence" value="ECO:0007669"/>
    <property type="project" value="UniProtKB-SubCell"/>
</dbReference>
<dbReference type="GO" id="GO:0000428">
    <property type="term" value="C:DNA-directed RNA polymerase complex"/>
    <property type="evidence" value="ECO:0007669"/>
    <property type="project" value="UniProtKB-KW"/>
</dbReference>
<dbReference type="GO" id="GO:0003677">
    <property type="term" value="F:DNA binding"/>
    <property type="evidence" value="ECO:0007669"/>
    <property type="project" value="UniProtKB-UniRule"/>
</dbReference>
<dbReference type="GO" id="GO:0003899">
    <property type="term" value="F:DNA-directed RNA polymerase activity"/>
    <property type="evidence" value="ECO:0007669"/>
    <property type="project" value="UniProtKB-UniRule"/>
</dbReference>
<dbReference type="GO" id="GO:0006351">
    <property type="term" value="P:DNA-templated transcription"/>
    <property type="evidence" value="ECO:0007669"/>
    <property type="project" value="UniProtKB-UniRule"/>
</dbReference>
<dbReference type="CDD" id="cd06528">
    <property type="entry name" value="RNAP_A"/>
    <property type="match status" value="1"/>
</dbReference>
<dbReference type="Gene3D" id="1.10.150.390">
    <property type="match status" value="1"/>
</dbReference>
<dbReference type="HAMAP" id="MF_00411">
    <property type="entry name" value="RNApol_arch_Rpo1C"/>
    <property type="match status" value="1"/>
</dbReference>
<dbReference type="InterPro" id="IPR045867">
    <property type="entry name" value="DNA-dir_RpoC_beta_prime"/>
</dbReference>
<dbReference type="InterPro" id="IPR007081">
    <property type="entry name" value="RNA_pol_Rpb1_5"/>
</dbReference>
<dbReference type="InterPro" id="IPR012757">
    <property type="entry name" value="RPO1C"/>
</dbReference>
<dbReference type="NCBIfam" id="TIGR02389">
    <property type="entry name" value="RNA_pol_rpoA2"/>
    <property type="match status" value="1"/>
</dbReference>
<dbReference type="PANTHER" id="PTHR19376">
    <property type="entry name" value="DNA-DIRECTED RNA POLYMERASE"/>
    <property type="match status" value="1"/>
</dbReference>
<dbReference type="PANTHER" id="PTHR19376:SF32">
    <property type="entry name" value="DNA-DIRECTED RNA POLYMERASE III SUBUNIT RPC1"/>
    <property type="match status" value="1"/>
</dbReference>
<dbReference type="Pfam" id="PF04998">
    <property type="entry name" value="RNA_pol_Rpb1_5"/>
    <property type="match status" value="1"/>
</dbReference>
<dbReference type="SUPFAM" id="SSF64484">
    <property type="entry name" value="beta and beta-prime subunits of DNA dependent RNA-polymerase"/>
    <property type="match status" value="1"/>
</dbReference>
<organism>
    <name type="scientific">Methanococcus maripaludis (strain C7 / ATCC BAA-1331)</name>
    <dbReference type="NCBI Taxonomy" id="426368"/>
    <lineage>
        <taxon>Archaea</taxon>
        <taxon>Methanobacteriati</taxon>
        <taxon>Methanobacteriota</taxon>
        <taxon>Methanomada group</taxon>
        <taxon>Methanococci</taxon>
        <taxon>Methanococcales</taxon>
        <taxon>Methanococcaceae</taxon>
        <taxon>Methanococcus</taxon>
    </lineage>
</organism>
<protein>
    <recommendedName>
        <fullName evidence="1">DNA-directed RNA polymerase subunit Rpo1C</fullName>
        <ecNumber evidence="1">2.7.7.6</ecNumber>
    </recommendedName>
    <alternativeName>
        <fullName evidence="1">DNA-directed RNA polymerase subunit A''</fullName>
    </alternativeName>
</protein>
<name>RPO1C_METM7</name>
<reference key="1">
    <citation type="submission" date="2007-06" db="EMBL/GenBank/DDBJ databases">
        <title>Complete sequence of Methanococcus maripaludis C7.</title>
        <authorList>
            <consortium name="US DOE Joint Genome Institute"/>
            <person name="Copeland A."/>
            <person name="Lucas S."/>
            <person name="Lapidus A."/>
            <person name="Barry K."/>
            <person name="Glavina del Rio T."/>
            <person name="Dalin E."/>
            <person name="Tice H."/>
            <person name="Pitluck S."/>
            <person name="Clum A."/>
            <person name="Schmutz J."/>
            <person name="Larimer F."/>
            <person name="Land M."/>
            <person name="Hauser L."/>
            <person name="Kyrpides N."/>
            <person name="Anderson I."/>
            <person name="Sieprawska-Lupa M."/>
            <person name="Whitman W.B."/>
            <person name="Richardson P."/>
        </authorList>
    </citation>
    <scope>NUCLEOTIDE SEQUENCE [LARGE SCALE GENOMIC DNA]</scope>
    <source>
        <strain>C7 / ATCC BAA-1331</strain>
    </source>
</reference>
<gene>
    <name evidence="1" type="primary">rpo1C</name>
    <name evidence="1" type="synonym">rpoA2</name>
    <name type="ordered locus">MmarC7_0609</name>
</gene>
<accession>A6VGV0</accession>
<feature type="chain" id="PRO_1000049927" description="DNA-directed RNA polymerase subunit Rpo1C">
    <location>
        <begin position="1"/>
        <end position="386"/>
    </location>
</feature>